<proteinExistence type="inferred from homology"/>
<evidence type="ECO:0000255" key="1">
    <source>
        <dbReference type="HAMAP-Rule" id="MF_01318"/>
    </source>
</evidence>
<evidence type="ECO:0000305" key="2"/>
<organism>
    <name type="scientific">Staphylococcus aureus (strain COL)</name>
    <dbReference type="NCBI Taxonomy" id="93062"/>
    <lineage>
        <taxon>Bacteria</taxon>
        <taxon>Bacillati</taxon>
        <taxon>Bacillota</taxon>
        <taxon>Bacilli</taxon>
        <taxon>Bacillales</taxon>
        <taxon>Staphylococcaceae</taxon>
        <taxon>Staphylococcus</taxon>
    </lineage>
</organism>
<name>RL1_STAAC</name>
<gene>
    <name evidence="1" type="primary">rplA</name>
    <name type="ordered locus">SACOL0584</name>
</gene>
<feature type="chain" id="PRO_0000125731" description="Large ribosomal subunit protein uL1">
    <location>
        <begin position="1"/>
        <end position="230"/>
    </location>
</feature>
<sequence>MAKKGKKYQEAASKVDRTQHYSVEEAIKLAKETSIANFDASVEVAFRLGIDTRKNDQQIRGAVVLPNGTGKSQSVLVFAKGDKIAEAEAAGADYVGEAEYVQKIQQGWFDFDVVVATPDMMGEVGKLGRVLGPKGLMPNPKTGTVTMDVKKAVEEIKAGKVEYRAEKAGIVHASIGKVSFTDEQLIENFNTLQDVLAKAKPSSAKGTYFKSVAVTTTMGPGVKIDTASFK</sequence>
<reference key="1">
    <citation type="journal article" date="2005" name="J. Bacteriol.">
        <title>Insights on evolution of virulence and resistance from the complete genome analysis of an early methicillin-resistant Staphylococcus aureus strain and a biofilm-producing methicillin-resistant Staphylococcus epidermidis strain.</title>
        <authorList>
            <person name="Gill S.R."/>
            <person name="Fouts D.E."/>
            <person name="Archer G.L."/>
            <person name="Mongodin E.F."/>
            <person name="DeBoy R.T."/>
            <person name="Ravel J."/>
            <person name="Paulsen I.T."/>
            <person name="Kolonay J.F."/>
            <person name="Brinkac L.M."/>
            <person name="Beanan M.J."/>
            <person name="Dodson R.J."/>
            <person name="Daugherty S.C."/>
            <person name="Madupu R."/>
            <person name="Angiuoli S.V."/>
            <person name="Durkin A.S."/>
            <person name="Haft D.H."/>
            <person name="Vamathevan J.J."/>
            <person name="Khouri H."/>
            <person name="Utterback T.R."/>
            <person name="Lee C."/>
            <person name="Dimitrov G."/>
            <person name="Jiang L."/>
            <person name="Qin H."/>
            <person name="Weidman J."/>
            <person name="Tran K."/>
            <person name="Kang K.H."/>
            <person name="Hance I.R."/>
            <person name="Nelson K.E."/>
            <person name="Fraser C.M."/>
        </authorList>
    </citation>
    <scope>NUCLEOTIDE SEQUENCE [LARGE SCALE GENOMIC DNA]</scope>
    <source>
        <strain>COL</strain>
    </source>
</reference>
<dbReference type="EMBL" id="CP000046">
    <property type="protein sequence ID" value="AAW37694.1"/>
    <property type="molecule type" value="Genomic_DNA"/>
</dbReference>
<dbReference type="RefSeq" id="WP_001074619.1">
    <property type="nucleotide sequence ID" value="NZ_JBGOFO010000009.1"/>
</dbReference>
<dbReference type="SMR" id="Q5HID7"/>
<dbReference type="GeneID" id="98344872"/>
<dbReference type="KEGG" id="sac:SACOL0584"/>
<dbReference type="HOGENOM" id="CLU_062853_0_0_9"/>
<dbReference type="Proteomes" id="UP000000530">
    <property type="component" value="Chromosome"/>
</dbReference>
<dbReference type="GO" id="GO:0015934">
    <property type="term" value="C:large ribosomal subunit"/>
    <property type="evidence" value="ECO:0007669"/>
    <property type="project" value="InterPro"/>
</dbReference>
<dbReference type="GO" id="GO:0019843">
    <property type="term" value="F:rRNA binding"/>
    <property type="evidence" value="ECO:0007669"/>
    <property type="project" value="UniProtKB-UniRule"/>
</dbReference>
<dbReference type="GO" id="GO:0003735">
    <property type="term" value="F:structural constituent of ribosome"/>
    <property type="evidence" value="ECO:0007669"/>
    <property type="project" value="InterPro"/>
</dbReference>
<dbReference type="GO" id="GO:0000049">
    <property type="term" value="F:tRNA binding"/>
    <property type="evidence" value="ECO:0007669"/>
    <property type="project" value="UniProtKB-KW"/>
</dbReference>
<dbReference type="GO" id="GO:0006417">
    <property type="term" value="P:regulation of translation"/>
    <property type="evidence" value="ECO:0007669"/>
    <property type="project" value="UniProtKB-KW"/>
</dbReference>
<dbReference type="GO" id="GO:0006412">
    <property type="term" value="P:translation"/>
    <property type="evidence" value="ECO:0007669"/>
    <property type="project" value="UniProtKB-UniRule"/>
</dbReference>
<dbReference type="CDD" id="cd00403">
    <property type="entry name" value="Ribosomal_L1"/>
    <property type="match status" value="1"/>
</dbReference>
<dbReference type="FunFam" id="3.40.50.790:FF:000001">
    <property type="entry name" value="50S ribosomal protein L1"/>
    <property type="match status" value="1"/>
</dbReference>
<dbReference type="Gene3D" id="3.30.190.20">
    <property type="match status" value="1"/>
</dbReference>
<dbReference type="Gene3D" id="3.40.50.790">
    <property type="match status" value="1"/>
</dbReference>
<dbReference type="HAMAP" id="MF_01318_B">
    <property type="entry name" value="Ribosomal_uL1_B"/>
    <property type="match status" value="1"/>
</dbReference>
<dbReference type="InterPro" id="IPR005878">
    <property type="entry name" value="Ribosom_uL1_bac-type"/>
</dbReference>
<dbReference type="InterPro" id="IPR002143">
    <property type="entry name" value="Ribosomal_uL1"/>
</dbReference>
<dbReference type="InterPro" id="IPR023674">
    <property type="entry name" value="Ribosomal_uL1-like"/>
</dbReference>
<dbReference type="InterPro" id="IPR028364">
    <property type="entry name" value="Ribosomal_uL1/biogenesis"/>
</dbReference>
<dbReference type="InterPro" id="IPR016095">
    <property type="entry name" value="Ribosomal_uL1_3-a/b-sand"/>
</dbReference>
<dbReference type="InterPro" id="IPR023673">
    <property type="entry name" value="Ribosomal_uL1_CS"/>
</dbReference>
<dbReference type="NCBIfam" id="TIGR01169">
    <property type="entry name" value="rplA_bact"/>
    <property type="match status" value="1"/>
</dbReference>
<dbReference type="PANTHER" id="PTHR36427">
    <property type="entry name" value="54S RIBOSOMAL PROTEIN L1, MITOCHONDRIAL"/>
    <property type="match status" value="1"/>
</dbReference>
<dbReference type="PANTHER" id="PTHR36427:SF3">
    <property type="entry name" value="LARGE RIBOSOMAL SUBUNIT PROTEIN UL1M"/>
    <property type="match status" value="1"/>
</dbReference>
<dbReference type="Pfam" id="PF00687">
    <property type="entry name" value="Ribosomal_L1"/>
    <property type="match status" value="1"/>
</dbReference>
<dbReference type="PIRSF" id="PIRSF002155">
    <property type="entry name" value="Ribosomal_L1"/>
    <property type="match status" value="1"/>
</dbReference>
<dbReference type="SUPFAM" id="SSF56808">
    <property type="entry name" value="Ribosomal protein L1"/>
    <property type="match status" value="1"/>
</dbReference>
<dbReference type="PROSITE" id="PS01199">
    <property type="entry name" value="RIBOSOMAL_L1"/>
    <property type="match status" value="1"/>
</dbReference>
<keyword id="KW-0678">Repressor</keyword>
<keyword id="KW-0687">Ribonucleoprotein</keyword>
<keyword id="KW-0689">Ribosomal protein</keyword>
<keyword id="KW-0694">RNA-binding</keyword>
<keyword id="KW-0699">rRNA-binding</keyword>
<keyword id="KW-0810">Translation regulation</keyword>
<keyword id="KW-0820">tRNA-binding</keyword>
<comment type="function">
    <text evidence="1">Binds directly to 23S rRNA. The L1 stalk is quite mobile in the ribosome, and is involved in E site tRNA release.</text>
</comment>
<comment type="function">
    <text evidence="1">Protein L1 is also a translational repressor protein, it controls the translation of the L11 operon by binding to its mRNA.</text>
</comment>
<comment type="subunit">
    <text evidence="1">Part of the 50S ribosomal subunit.</text>
</comment>
<comment type="similarity">
    <text evidence="1">Belongs to the universal ribosomal protein uL1 family.</text>
</comment>
<protein>
    <recommendedName>
        <fullName evidence="1">Large ribosomal subunit protein uL1</fullName>
    </recommendedName>
    <alternativeName>
        <fullName evidence="2">50S ribosomal protein L1</fullName>
    </alternativeName>
</protein>
<accession>Q5HID7</accession>